<proteinExistence type="inferred from homology"/>
<feature type="initiator methionine" description="Removed; by host" evidence="1">
    <location>
        <position position="1"/>
    </location>
</feature>
<feature type="chain" id="PRO_0000390814" description="Gag polyprotein" evidence="1">
    <location>
        <begin position="2"/>
        <end position="540"/>
    </location>
</feature>
<feature type="chain" id="PRO_0000040908" description="Matrix protein p15" evidence="4">
    <location>
        <begin position="2"/>
        <end position="129"/>
    </location>
</feature>
<feature type="chain" id="PRO_0000040909" description="RNA-binding phosphoprotein p12" evidence="4">
    <location>
        <begin position="130"/>
        <end position="217"/>
    </location>
</feature>
<feature type="chain" id="PRO_0000040910" description="Capsid protein p30" evidence="4">
    <location>
        <begin position="218"/>
        <end position="480"/>
    </location>
</feature>
<feature type="chain" id="PRO_0000040911" description="Nucleocapsid protein p10-gag" evidence="4">
    <location>
        <begin position="481"/>
        <end position="540"/>
    </location>
</feature>
<feature type="zinc finger region" description="CCHC-type" evidence="5">
    <location>
        <begin position="504"/>
        <end position="521"/>
    </location>
</feature>
<feature type="region of interest" description="Disordered" evidence="6">
    <location>
        <begin position="107"/>
        <end position="222"/>
    </location>
</feature>
<feature type="region of interest" description="Disordered" evidence="6">
    <location>
        <begin position="437"/>
        <end position="540"/>
    </location>
</feature>
<feature type="coiled-coil region" evidence="4">
    <location>
        <begin position="440"/>
        <end position="481"/>
    </location>
</feature>
<feature type="short sequence motif" description="PTAP/PSAP motif">
    <location>
        <begin position="109"/>
        <end position="112"/>
    </location>
</feature>
<feature type="short sequence motif" description="LYPX(n)L motif">
    <location>
        <begin position="128"/>
        <end position="132"/>
    </location>
</feature>
<feature type="short sequence motif" description="PPXY motif">
    <location>
        <begin position="160"/>
        <end position="163"/>
    </location>
</feature>
<feature type="compositionally biased region" description="Polar residues" evidence="6">
    <location>
        <begin position="134"/>
        <end position="144"/>
    </location>
</feature>
<feature type="compositionally biased region" description="Low complexity" evidence="6">
    <location>
        <begin position="145"/>
        <end position="155"/>
    </location>
</feature>
<feature type="compositionally biased region" description="Pro residues" evidence="6">
    <location>
        <begin position="159"/>
        <end position="173"/>
    </location>
</feature>
<feature type="compositionally biased region" description="Basic and acidic residues" evidence="6">
    <location>
        <begin position="437"/>
        <end position="468"/>
    </location>
</feature>
<feature type="compositionally biased region" description="Basic and acidic residues" evidence="6">
    <location>
        <begin position="488"/>
        <end position="521"/>
    </location>
</feature>
<feature type="site" description="Cleavage; by viral protease p14" evidence="1">
    <location>
        <begin position="129"/>
        <end position="130"/>
    </location>
</feature>
<feature type="site" description="Cleavage; by viral protease p14" evidence="1">
    <location>
        <begin position="217"/>
        <end position="218"/>
    </location>
</feature>
<feature type="site" description="Cleavage; by viral protease p14" evidence="1">
    <location>
        <begin position="480"/>
        <end position="481"/>
    </location>
</feature>
<feature type="modified residue" description="Phosphoserine; by host" evidence="1">
    <location>
        <position position="194"/>
    </location>
</feature>
<feature type="lipid moiety-binding region" description="N-myristoyl glycine; by host" evidence="1">
    <location>
        <position position="2"/>
    </location>
</feature>
<accession>P21435</accession>
<accession>Q80877</accession>
<accession>Q80878</accession>
<accession>Q80879</accession>
<accession>Q80880</accession>
<name>GAG_MLVHO</name>
<reference key="1">
    <citation type="journal article" date="1989" name="Virology">
        <title>Nucleotide sequence and mode of transmission of the wild mouse ecotropic virus, HoMuLV.</title>
        <authorList>
            <person name="Voytek P."/>
            <person name="Kozak C.A."/>
        </authorList>
    </citation>
    <scope>NUCLEOTIDE SEQUENCE [GENOMIC RNA]</scope>
</reference>
<organism>
    <name type="scientific">Hortulanus murine leukemia virus</name>
    <name type="common">HoMuLV</name>
    <name type="synonym">Mus hortulanus virus</name>
    <dbReference type="NCBI Taxonomy" id="11799"/>
    <lineage>
        <taxon>Viruses</taxon>
        <taxon>Riboviria</taxon>
        <taxon>Pararnavirae</taxon>
        <taxon>Artverviricota</taxon>
        <taxon>Revtraviricetes</taxon>
        <taxon>Ortervirales</taxon>
        <taxon>Retroviridae</taxon>
        <taxon>Orthoretrovirinae</taxon>
        <taxon>Gammaretrovirus</taxon>
        <taxon>Murine leukemia virus</taxon>
    </lineage>
</organism>
<organismHost>
    <name type="scientific">Mus musculus</name>
    <name type="common">Mouse</name>
    <dbReference type="NCBI Taxonomy" id="10090"/>
</organismHost>
<evidence type="ECO:0000250" key="1"/>
<evidence type="ECO:0000250" key="2">
    <source>
        <dbReference type="UniProtKB" id="P03332"/>
    </source>
</evidence>
<evidence type="ECO:0000250" key="3">
    <source>
        <dbReference type="UniProtKB" id="P03336"/>
    </source>
</evidence>
<evidence type="ECO:0000255" key="4"/>
<evidence type="ECO:0000255" key="5">
    <source>
        <dbReference type="PROSITE-ProRule" id="PRU00047"/>
    </source>
</evidence>
<evidence type="ECO:0000256" key="6">
    <source>
        <dbReference type="SAM" id="MobiDB-lite"/>
    </source>
</evidence>
<evidence type="ECO:0000305" key="7"/>
<keyword id="KW-0167">Capsid protein</keyword>
<keyword id="KW-0175">Coiled coil</keyword>
<keyword id="KW-1032">Host cell membrane</keyword>
<keyword id="KW-1039">Host endosome</keyword>
<keyword id="KW-1043">Host membrane</keyword>
<keyword id="KW-0945">Host-virus interaction</keyword>
<keyword id="KW-0449">Lipoprotein</keyword>
<keyword id="KW-0472">Membrane</keyword>
<keyword id="KW-0479">Metal-binding</keyword>
<keyword id="KW-0519">Myristate</keyword>
<keyword id="KW-0597">Phosphoprotein</keyword>
<keyword id="KW-0694">RNA-binding</keyword>
<keyword id="KW-1198">Viral budding</keyword>
<keyword id="KW-1187">Viral budding via the host ESCRT complexes</keyword>
<keyword id="KW-0468">Viral matrix protein</keyword>
<keyword id="KW-0543">Viral nucleoprotein</keyword>
<keyword id="KW-1188">Viral release from host cell</keyword>
<keyword id="KW-0946">Virion</keyword>
<keyword id="KW-0862">Zinc</keyword>
<keyword id="KW-0863">Zinc-finger</keyword>
<sequence>MGQTITTPLSLTLDHWRDVQRIASNQSVDVKKRRWVTFCSAEWPTFNVGWPQDGTFNKDIITQVKIKVFSPGPHGHPDQVPYIVTWEAIAYDPPPWAKPFVHPQLSVSPSAPSAFSHEVSGPPTRSSLYPALTPTKSPSPKTQVLSDDGGPLIDLLSDDPPPYRGPENQPPAGRPTTTMQEMPRLPLKVPQEPSPMASRLRGRREHPAADSTTSQAFPLRTGGNGQLQYWPFSSADLYNWKNNNPSFSEDPGKLTALIESVLITHQPTWDDCQQLLGTLLTGEEKQRVLLEARKAVRGNDGRPTQLPNEINDAFPLERPDWDYTTPAGRNHLVLYRQLLLAGLQHAGRSPTNLAKVKGITQGPNESPSAFLERLKEAYRRYTPYDPEDPGQETNVSMSFIWQSAPDIGRKLERLEDLKSKTLGDLVREAERIFNKRETPEEREERIRRETEEKEERRRAENEQREKERDRRRHREMSKLLATVVSGQRQDRQGGERRRPQLDKDQCAYCKEKGHWAKDCPKKPRGPRGPRPQTSLLTLDD</sequence>
<comment type="function">
    <molecule>Gag polyprotein</molecule>
    <text evidence="2">Plays a role in budding and is processed by the viral protease during virion maturation outside the cell. During budding, it recruits, in a PPXY-dependent or independent manner, Nedd4-like ubiquitin ligases that conjugate ubiquitin molecules to Gag, or to Gag binding host factors. Interaction with HECT ubiquitin ligases probably links the viral protein to the host ESCRT pathway and facilitates release.</text>
</comment>
<comment type="function">
    <molecule>Matrix protein p15</molecule>
    <text evidence="2">Targets Gag and gag-pol polyproteins to the plasma membrane via a multipartite membrane binding signal, that includes its myristoylated N-terminus. Also mediates nuclear localization of the pre-integration complex.</text>
</comment>
<comment type="function">
    <molecule>RNA-binding phosphoprotein p12</molecule>
    <text evidence="2">Constituent of the pre-integration complex (PIC) which tethers the latter to mitotic chromosomes.</text>
</comment>
<comment type="function">
    <molecule>Capsid protein p30</molecule>
    <text evidence="2">Forms the spherical core of the virion that encapsulates the genomic RNA-nucleocapsid complex.</text>
</comment>
<comment type="function">
    <molecule>Nucleocapsid protein p10-gag</molecule>
    <text evidence="2">Involved in the packaging and encapsidation of two copies of the genome. Binds with high affinity to conserved UCUG elements within the packaging signal, located near the 5'-end of the genome. This binding is dependent on genome dimerization.</text>
</comment>
<comment type="subunit">
    <molecule>Gag polyprotein</molecule>
    <text evidence="2">Interacts (via PPXY motif) with host NEDD4 (By similarity). Interacts (via PSAP motif) with host TSG101 (By similarity). Interacts (via LYPX(n)L motif) with host PDCD6IP (By similarity).</text>
</comment>
<comment type="subunit">
    <molecule>Capsid protein p30</molecule>
    <text evidence="3">Homohexamer. Further associates as homomultimer (By similarity). The virus core is composed of a lattice formed from hexagonal rings, each containing six capsid monomers (By similarity).</text>
</comment>
<comment type="subcellular location">
    <molecule>Gag polyprotein</molecule>
    <subcellularLocation>
        <location evidence="1">Virion</location>
    </subcellularLocation>
    <subcellularLocation>
        <location evidence="7">Host cell membrane</location>
        <topology evidence="7">Lipid-anchor</topology>
    </subcellularLocation>
    <subcellularLocation>
        <location evidence="7">Host late endosome membrane</location>
        <topology evidence="7">Lipid-anchor</topology>
    </subcellularLocation>
    <subcellularLocation>
        <location evidence="1">Host endosome</location>
        <location evidence="1">Host multivesicular body</location>
    </subcellularLocation>
    <text evidence="1">These locations are probably linked to virus assembly sites.</text>
</comment>
<comment type="subcellular location">
    <molecule>Matrix protein p15</molecule>
    <subcellularLocation>
        <location evidence="7">Virion</location>
    </subcellularLocation>
</comment>
<comment type="subcellular location">
    <molecule>Capsid protein p30</molecule>
    <subcellularLocation>
        <location evidence="7">Virion</location>
    </subcellularLocation>
</comment>
<comment type="subcellular location">
    <molecule>Nucleocapsid protein p10-gag</molecule>
    <subcellularLocation>
        <location evidence="7">Virion</location>
    </subcellularLocation>
</comment>
<comment type="domain">
    <molecule>Gag polyprotein</molecule>
    <text evidence="2">Late-budding domains (L domains) are short sequence motifs essential for viral particle budding. They recruit proteins of the host ESCRT machinery (Endosomal Sorting Complex Required for Transport) or ESCRT-associated proteins. RNA-binding phosphoprotein p12 contains one L domain: a PPXY motif which interacts with the WW domain 3 of NEDD4 E3 ubiquitin ligase. PPXY motif is essential for virus egress. Matrix protein p15 contains one L domain: a PTAP/PSAP motif, which interacts with the UEV domain of TSG101. The junction between the matrix protein p15 and RNA-binding phosphoprotein p12 also contains one L domain: a LYPX(n)L motif which interacts with PDCD6IP.</text>
</comment>
<comment type="PTM">
    <molecule>Gag polyprotein</molecule>
    <text evidence="2">Specific enzymatic cleavages by the viral protease yield mature proteins. The protease is released by autocatalytic cleavage. The polyprotein is cleaved during and after budding, this process is termed maturation.</text>
</comment>
<comment type="PTM">
    <text evidence="1">RNA-binding phosphoprotein p12 is phosphorylated on serine residues.</text>
</comment>
<dbReference type="EMBL" id="M26528">
    <property type="protein sequence ID" value="AAA45464.1"/>
    <property type="molecule type" value="Genomic_RNA"/>
</dbReference>
<dbReference type="PIR" id="A32594">
    <property type="entry name" value="FOMVHL"/>
</dbReference>
<dbReference type="SMR" id="P21435"/>
<dbReference type="ELM" id="P21435"/>
<dbReference type="GO" id="GO:0044185">
    <property type="term" value="C:host cell late endosome membrane"/>
    <property type="evidence" value="ECO:0007669"/>
    <property type="project" value="UniProtKB-SubCell"/>
</dbReference>
<dbReference type="GO" id="GO:0020002">
    <property type="term" value="C:host cell plasma membrane"/>
    <property type="evidence" value="ECO:0007669"/>
    <property type="project" value="UniProtKB-SubCell"/>
</dbReference>
<dbReference type="GO" id="GO:0072494">
    <property type="term" value="C:host multivesicular body"/>
    <property type="evidence" value="ECO:0007669"/>
    <property type="project" value="UniProtKB-SubCell"/>
</dbReference>
<dbReference type="GO" id="GO:0016020">
    <property type="term" value="C:membrane"/>
    <property type="evidence" value="ECO:0007669"/>
    <property type="project" value="UniProtKB-KW"/>
</dbReference>
<dbReference type="GO" id="GO:0019013">
    <property type="term" value="C:viral nucleocapsid"/>
    <property type="evidence" value="ECO:0007669"/>
    <property type="project" value="UniProtKB-KW"/>
</dbReference>
<dbReference type="GO" id="GO:0003723">
    <property type="term" value="F:RNA binding"/>
    <property type="evidence" value="ECO:0007669"/>
    <property type="project" value="UniProtKB-KW"/>
</dbReference>
<dbReference type="GO" id="GO:0039660">
    <property type="term" value="F:structural constituent of virion"/>
    <property type="evidence" value="ECO:0007669"/>
    <property type="project" value="UniProtKB-KW"/>
</dbReference>
<dbReference type="GO" id="GO:0008270">
    <property type="term" value="F:zinc ion binding"/>
    <property type="evidence" value="ECO:0007669"/>
    <property type="project" value="UniProtKB-KW"/>
</dbReference>
<dbReference type="GO" id="GO:0039702">
    <property type="term" value="P:viral budding via host ESCRT complex"/>
    <property type="evidence" value="ECO:0007669"/>
    <property type="project" value="UniProtKB-KW"/>
</dbReference>
<dbReference type="FunFam" id="1.10.150.180:FF:000001">
    <property type="entry name" value="Gag polyprotein"/>
    <property type="match status" value="1"/>
</dbReference>
<dbReference type="Gene3D" id="1.10.150.180">
    <property type="entry name" value="Gamma-retroviral matrix domain"/>
    <property type="match status" value="1"/>
</dbReference>
<dbReference type="Gene3D" id="1.10.375.10">
    <property type="entry name" value="Human Immunodeficiency Virus Type 1 Capsid Protein"/>
    <property type="match status" value="1"/>
</dbReference>
<dbReference type="Gene3D" id="4.10.60.10">
    <property type="entry name" value="Zinc finger, CCHC-type"/>
    <property type="match status" value="1"/>
</dbReference>
<dbReference type="InterPro" id="IPR000840">
    <property type="entry name" value="G_retro_matrix"/>
</dbReference>
<dbReference type="InterPro" id="IPR036946">
    <property type="entry name" value="G_retro_matrix_sf"/>
</dbReference>
<dbReference type="InterPro" id="IPR002079">
    <property type="entry name" value="Gag_p12"/>
</dbReference>
<dbReference type="InterPro" id="IPR003036">
    <property type="entry name" value="Gag_P30"/>
</dbReference>
<dbReference type="InterPro" id="IPR008919">
    <property type="entry name" value="Retrov_capsid_N"/>
</dbReference>
<dbReference type="InterPro" id="IPR050462">
    <property type="entry name" value="Retroviral_Gag-Pol_poly"/>
</dbReference>
<dbReference type="InterPro" id="IPR010999">
    <property type="entry name" value="Retrovr_matrix"/>
</dbReference>
<dbReference type="InterPro" id="IPR001878">
    <property type="entry name" value="Znf_CCHC"/>
</dbReference>
<dbReference type="InterPro" id="IPR036875">
    <property type="entry name" value="Znf_CCHC_sf"/>
</dbReference>
<dbReference type="PANTHER" id="PTHR33166">
    <property type="entry name" value="GAG_P30 DOMAIN-CONTAINING PROTEIN"/>
    <property type="match status" value="1"/>
</dbReference>
<dbReference type="Pfam" id="PF01140">
    <property type="entry name" value="Gag_MA"/>
    <property type="match status" value="1"/>
</dbReference>
<dbReference type="Pfam" id="PF01141">
    <property type="entry name" value="Gag_p12"/>
    <property type="match status" value="1"/>
</dbReference>
<dbReference type="Pfam" id="PF02093">
    <property type="entry name" value="Gag_p30"/>
    <property type="match status" value="1"/>
</dbReference>
<dbReference type="Pfam" id="PF00098">
    <property type="entry name" value="zf-CCHC"/>
    <property type="match status" value="1"/>
</dbReference>
<dbReference type="SMART" id="SM00343">
    <property type="entry name" value="ZnF_C2HC"/>
    <property type="match status" value="1"/>
</dbReference>
<dbReference type="SUPFAM" id="SSF47836">
    <property type="entry name" value="Retroviral matrix proteins"/>
    <property type="match status" value="1"/>
</dbReference>
<dbReference type="SUPFAM" id="SSF47943">
    <property type="entry name" value="Retrovirus capsid protein, N-terminal core domain"/>
    <property type="match status" value="1"/>
</dbReference>
<dbReference type="SUPFAM" id="SSF57756">
    <property type="entry name" value="Retrovirus zinc finger-like domains"/>
    <property type="match status" value="1"/>
</dbReference>
<dbReference type="PROSITE" id="PS50158">
    <property type="entry name" value="ZF_CCHC"/>
    <property type="match status" value="1"/>
</dbReference>
<protein>
    <recommendedName>
        <fullName>Gag polyprotein</fullName>
    </recommendedName>
    <alternativeName>
        <fullName>Core polyprotein</fullName>
    </alternativeName>
    <component>
        <recommendedName>
            <fullName>Matrix protein p15</fullName>
            <shortName>MA</shortName>
        </recommendedName>
    </component>
    <component>
        <recommendedName>
            <fullName>RNA-binding phosphoprotein p12</fullName>
        </recommendedName>
        <alternativeName>
            <fullName>pp12</fullName>
        </alternativeName>
    </component>
    <component>
        <recommendedName>
            <fullName>Capsid protein p30</fullName>
            <shortName>CA</shortName>
        </recommendedName>
    </component>
    <component>
        <recommendedName>
            <fullName>Nucleocapsid protein p10-gag</fullName>
            <shortName>NC-gag</shortName>
        </recommendedName>
    </component>
</protein>
<gene>
    <name type="primary">gag</name>
</gene>